<accession>O22338</accession>
<sequence length="393" mass="43151">MEDTFLFTSESVNEGHPDKLCDQISDAVLDACLEQDPDSKVACETCTKTNMVMVFGEITTKGNIDYEKIVRDTCRDIGFTSEDVGLDADHCKVLVNIEQQSPDIAQGVHGHFTKRPEEIGAGDQGHMFGYATDETPELMPLSHVLATKLGARLTEVRKNGTCPWLRPDGKTQVTVEYRNDHGAMIPVRVHTVLISTQHDETVTNDEIAADLKEHVIKPVIPEQYLDEKTIFHLNPSGRFVIGGPHGDAGLTGRKIIIDTYGGWGAHGGGAFSGKDPTKVDRSGAYVARQAAKSIVASELARRCIVQVSYAIGVPEPLSVFVDTYGTGKIPDKEILKIVKENFDFRPGLITINLGLKRGGYRYLKTAAYGHFGRDDPDFTWEVVKPLELEKPAA</sequence>
<gene>
    <name type="primary">METK</name>
</gene>
<comment type="function">
    <text evidence="5">Catalyzes the formation of S-adenosylmethionine from methionine and ATP. The reaction comprises two steps that are both catalyzed by the same enzyme: formation of S-adenosylmethionine (AdoMet) and triphosphate, and subsequent hydrolysis of the triphosphate.</text>
</comment>
<comment type="catalytic activity">
    <reaction evidence="5">
        <text>L-methionine + ATP + H2O = S-adenosyl-L-methionine + phosphate + diphosphate</text>
        <dbReference type="Rhea" id="RHEA:21080"/>
        <dbReference type="ChEBI" id="CHEBI:15377"/>
        <dbReference type="ChEBI" id="CHEBI:30616"/>
        <dbReference type="ChEBI" id="CHEBI:33019"/>
        <dbReference type="ChEBI" id="CHEBI:43474"/>
        <dbReference type="ChEBI" id="CHEBI:57844"/>
        <dbReference type="ChEBI" id="CHEBI:59789"/>
        <dbReference type="EC" id="2.5.1.6"/>
    </reaction>
</comment>
<comment type="cofactor">
    <cofactor evidence="5">
        <name>Mn(2+)</name>
        <dbReference type="ChEBI" id="CHEBI:29035"/>
    </cofactor>
    <cofactor evidence="5">
        <name>Mg(2+)</name>
        <dbReference type="ChEBI" id="CHEBI:18420"/>
    </cofactor>
    <cofactor evidence="5">
        <name>Co(2+)</name>
        <dbReference type="ChEBI" id="CHEBI:48828"/>
    </cofactor>
    <text evidence="3 5">Binds 2 divalent ions per subunit. The metal ions interact primarily with the substrate (By similarity). Can utilize magnesium, manganese or cobalt (in vitro) (By similarity).</text>
</comment>
<comment type="cofactor">
    <cofactor evidence="5">
        <name>K(+)</name>
        <dbReference type="ChEBI" id="CHEBI:29103"/>
    </cofactor>
    <text evidence="3">Binds 1 potassium ion per subunit. The potassium ion interacts primarily with the substrate (By similarity).</text>
</comment>
<comment type="pathway">
    <text evidence="5">Amino-acid biosynthesis; S-adenosyl-L-methionine biosynthesis; S-adenosyl-L-methionine from L-methionine: step 1/1.</text>
</comment>
<comment type="subunit">
    <text evidence="1">Homotetramer.</text>
</comment>
<comment type="subcellular location">
    <subcellularLocation>
        <location evidence="1">Cytoplasm</location>
    </subcellularLocation>
</comment>
<comment type="similarity">
    <text evidence="6">Belongs to the AdoMet synthase family.</text>
</comment>
<proteinExistence type="evidence at transcript level"/>
<feature type="chain" id="PRO_0000174469" description="S-adenosylmethionine synthase">
    <location>
        <begin position="1"/>
        <end position="393"/>
    </location>
</feature>
<feature type="binding site" evidence="3">
    <location>
        <position position="10"/>
    </location>
    <ligand>
        <name>Mg(2+)</name>
        <dbReference type="ChEBI" id="CHEBI:18420"/>
    </ligand>
</feature>
<feature type="binding site" description="in other chain" evidence="4">
    <location>
        <position position="16"/>
    </location>
    <ligand>
        <name>ATP</name>
        <dbReference type="ChEBI" id="CHEBI:30616"/>
        <note>ligand shared between two neighboring subunits</note>
    </ligand>
</feature>
<feature type="binding site" evidence="2">
    <location>
        <position position="44"/>
    </location>
    <ligand>
        <name>K(+)</name>
        <dbReference type="ChEBI" id="CHEBI:29103"/>
    </ligand>
</feature>
<feature type="binding site" description="in other chain" evidence="2">
    <location>
        <position position="57"/>
    </location>
    <ligand>
        <name>L-methionine</name>
        <dbReference type="ChEBI" id="CHEBI:57844"/>
        <note>ligand shared between two neighboring subunits</note>
    </ligand>
</feature>
<feature type="binding site" description="in other chain" evidence="2">
    <location>
        <position position="100"/>
    </location>
    <ligand>
        <name>L-methionine</name>
        <dbReference type="ChEBI" id="CHEBI:57844"/>
        <note>ligand shared between two neighboring subunits</note>
    </ligand>
</feature>
<feature type="binding site" description="in other chain" evidence="4">
    <location>
        <begin position="168"/>
        <end position="170"/>
    </location>
    <ligand>
        <name>ATP</name>
        <dbReference type="ChEBI" id="CHEBI:30616"/>
        <note>ligand shared between two neighboring subunits</note>
    </ligand>
</feature>
<feature type="binding site" description="in other chain" evidence="4">
    <location>
        <begin position="236"/>
        <end position="239"/>
    </location>
    <ligand>
        <name>ATP</name>
        <dbReference type="ChEBI" id="CHEBI:30616"/>
        <note>ligand shared between two neighboring subunits</note>
    </ligand>
</feature>
<feature type="binding site" description="in other chain" evidence="4">
    <location>
        <position position="247"/>
    </location>
    <ligand>
        <name>ATP</name>
        <dbReference type="ChEBI" id="CHEBI:30616"/>
        <note>ligand shared between two neighboring subunits</note>
    </ligand>
</feature>
<feature type="binding site" evidence="2">
    <location>
        <position position="247"/>
    </location>
    <ligand>
        <name>L-methionine</name>
        <dbReference type="ChEBI" id="CHEBI:57844"/>
        <note>ligand shared between two neighboring subunits</note>
    </ligand>
</feature>
<feature type="binding site" description="in other chain" evidence="2">
    <location>
        <begin position="253"/>
        <end position="254"/>
    </location>
    <ligand>
        <name>ATP</name>
        <dbReference type="ChEBI" id="CHEBI:30616"/>
        <note>ligand shared between two neighboring subunits</note>
    </ligand>
</feature>
<feature type="binding site" evidence="2">
    <location>
        <position position="270"/>
    </location>
    <ligand>
        <name>ATP</name>
        <dbReference type="ChEBI" id="CHEBI:30616"/>
        <note>ligand shared between two neighboring subunits</note>
    </ligand>
</feature>
<feature type="binding site" evidence="2">
    <location>
        <position position="274"/>
    </location>
    <ligand>
        <name>ATP</name>
        <dbReference type="ChEBI" id="CHEBI:30616"/>
        <note>ligand shared between two neighboring subunits</note>
    </ligand>
</feature>
<feature type="binding site" evidence="3">
    <location>
        <position position="278"/>
    </location>
    <ligand>
        <name>ATP</name>
        <dbReference type="ChEBI" id="CHEBI:30616"/>
        <note>ligand shared between two neighboring subunits</note>
    </ligand>
</feature>
<feature type="binding site" description="in other chain" evidence="2">
    <location>
        <position position="278"/>
    </location>
    <ligand>
        <name>L-methionine</name>
        <dbReference type="ChEBI" id="CHEBI:57844"/>
        <note>ligand shared between two neighboring subunits</note>
    </ligand>
</feature>
<protein>
    <recommendedName>
        <fullName>S-adenosylmethionine synthase</fullName>
        <shortName>AdoMet synthase</shortName>
        <ecNumber evidence="5">2.5.1.6</ecNumber>
    </recommendedName>
    <alternativeName>
        <fullName>Methionine adenosyltransferase</fullName>
        <shortName>MAT</shortName>
    </alternativeName>
</protein>
<reference key="1">
    <citation type="online journal article" date="1997" name="Plant Gene Register">
        <title>Cloning and nucleotide sequence of a S-adenosyl-L-methionine synthetase cDNA from banana.</title>
        <authorList>
            <person name="Do Y.-Y."/>
            <person name="Chang C.-Y."/>
            <person name="Cheng C.-F."/>
            <person name="Huang P.-L."/>
        </authorList>
        <locator>PGR97-101</locator>
    </citation>
    <scope>NUCLEOTIDE SEQUENCE [MRNA]</scope>
    <source>
        <strain>cv. Hsien Jin Chiao</strain>
        <tissue>Fruit</tissue>
    </source>
</reference>
<organism>
    <name type="scientific">Musa acuminata</name>
    <name type="common">Banana</name>
    <name type="synonym">Musa cavendishii</name>
    <dbReference type="NCBI Taxonomy" id="4641"/>
    <lineage>
        <taxon>Eukaryota</taxon>
        <taxon>Viridiplantae</taxon>
        <taxon>Streptophyta</taxon>
        <taxon>Embryophyta</taxon>
        <taxon>Tracheophyta</taxon>
        <taxon>Spermatophyta</taxon>
        <taxon>Magnoliopsida</taxon>
        <taxon>Liliopsida</taxon>
        <taxon>Zingiberales</taxon>
        <taxon>Musaceae</taxon>
        <taxon>Musa</taxon>
    </lineage>
</organism>
<evidence type="ECO:0000250" key="1"/>
<evidence type="ECO:0000250" key="2">
    <source>
        <dbReference type="UniProtKB" id="P0A817"/>
    </source>
</evidence>
<evidence type="ECO:0000250" key="3">
    <source>
        <dbReference type="UniProtKB" id="P13444"/>
    </source>
</evidence>
<evidence type="ECO:0000250" key="4">
    <source>
        <dbReference type="UniProtKB" id="Q00266"/>
    </source>
</evidence>
<evidence type="ECO:0000250" key="5">
    <source>
        <dbReference type="UniProtKB" id="Q96551"/>
    </source>
</evidence>
<evidence type="ECO:0000305" key="6"/>
<name>METK_MUSAC</name>
<dbReference type="EC" id="2.5.1.6" evidence="5"/>
<dbReference type="EMBL" id="AF004317">
    <property type="protein sequence ID" value="AAB71138.1"/>
    <property type="molecule type" value="mRNA"/>
</dbReference>
<dbReference type="SMR" id="O22338"/>
<dbReference type="UniPathway" id="UPA00315">
    <property type="reaction ID" value="UER00080"/>
</dbReference>
<dbReference type="GO" id="GO:0005737">
    <property type="term" value="C:cytoplasm"/>
    <property type="evidence" value="ECO:0007669"/>
    <property type="project" value="UniProtKB-SubCell"/>
</dbReference>
<dbReference type="GO" id="GO:0005524">
    <property type="term" value="F:ATP binding"/>
    <property type="evidence" value="ECO:0007669"/>
    <property type="project" value="UniProtKB-KW"/>
</dbReference>
<dbReference type="GO" id="GO:0046872">
    <property type="term" value="F:metal ion binding"/>
    <property type="evidence" value="ECO:0007669"/>
    <property type="project" value="UniProtKB-KW"/>
</dbReference>
<dbReference type="GO" id="GO:0004478">
    <property type="term" value="F:methionine adenosyltransferase activity"/>
    <property type="evidence" value="ECO:0007669"/>
    <property type="project" value="UniProtKB-EC"/>
</dbReference>
<dbReference type="GO" id="GO:0006730">
    <property type="term" value="P:one-carbon metabolic process"/>
    <property type="evidence" value="ECO:0007669"/>
    <property type="project" value="UniProtKB-KW"/>
</dbReference>
<dbReference type="GO" id="GO:0006556">
    <property type="term" value="P:S-adenosylmethionine biosynthetic process"/>
    <property type="evidence" value="ECO:0007669"/>
    <property type="project" value="UniProtKB-UniPathway"/>
</dbReference>
<dbReference type="CDD" id="cd18079">
    <property type="entry name" value="S-AdoMet_synt"/>
    <property type="match status" value="1"/>
</dbReference>
<dbReference type="FunFam" id="3.30.300.10:FF:000001">
    <property type="entry name" value="S-adenosylmethionine synthase"/>
    <property type="match status" value="1"/>
</dbReference>
<dbReference type="FunFam" id="3.30.300.10:FF:000003">
    <property type="entry name" value="S-adenosylmethionine synthase"/>
    <property type="match status" value="1"/>
</dbReference>
<dbReference type="FunFam" id="3.30.300.10:FF:000004">
    <property type="entry name" value="S-adenosylmethionine synthase"/>
    <property type="match status" value="1"/>
</dbReference>
<dbReference type="Gene3D" id="3.30.300.10">
    <property type="match status" value="3"/>
</dbReference>
<dbReference type="HAMAP" id="MF_00086">
    <property type="entry name" value="S_AdoMet_synth1"/>
    <property type="match status" value="1"/>
</dbReference>
<dbReference type="InterPro" id="IPR022631">
    <property type="entry name" value="ADOMET_SYNTHASE_CS"/>
</dbReference>
<dbReference type="InterPro" id="IPR022630">
    <property type="entry name" value="S-AdoMet_synt_C"/>
</dbReference>
<dbReference type="InterPro" id="IPR022629">
    <property type="entry name" value="S-AdoMet_synt_central"/>
</dbReference>
<dbReference type="InterPro" id="IPR022628">
    <property type="entry name" value="S-AdoMet_synt_N"/>
</dbReference>
<dbReference type="InterPro" id="IPR002133">
    <property type="entry name" value="S-AdoMet_synthetase"/>
</dbReference>
<dbReference type="InterPro" id="IPR022636">
    <property type="entry name" value="S-AdoMet_synthetase_sfam"/>
</dbReference>
<dbReference type="NCBIfam" id="TIGR01034">
    <property type="entry name" value="metK"/>
    <property type="match status" value="1"/>
</dbReference>
<dbReference type="PANTHER" id="PTHR11964">
    <property type="entry name" value="S-ADENOSYLMETHIONINE SYNTHETASE"/>
    <property type="match status" value="1"/>
</dbReference>
<dbReference type="Pfam" id="PF02773">
    <property type="entry name" value="S-AdoMet_synt_C"/>
    <property type="match status" value="1"/>
</dbReference>
<dbReference type="Pfam" id="PF02772">
    <property type="entry name" value="S-AdoMet_synt_M"/>
    <property type="match status" value="1"/>
</dbReference>
<dbReference type="Pfam" id="PF00438">
    <property type="entry name" value="S-AdoMet_synt_N"/>
    <property type="match status" value="1"/>
</dbReference>
<dbReference type="PIRSF" id="PIRSF000497">
    <property type="entry name" value="MAT"/>
    <property type="match status" value="1"/>
</dbReference>
<dbReference type="SUPFAM" id="SSF55973">
    <property type="entry name" value="S-adenosylmethionine synthetase"/>
    <property type="match status" value="3"/>
</dbReference>
<dbReference type="PROSITE" id="PS00376">
    <property type="entry name" value="ADOMET_SYNTHASE_1"/>
    <property type="match status" value="1"/>
</dbReference>
<dbReference type="PROSITE" id="PS00377">
    <property type="entry name" value="ADOMET_SYNTHASE_2"/>
    <property type="match status" value="1"/>
</dbReference>
<keyword id="KW-0067">ATP-binding</keyword>
<keyword id="KW-0170">Cobalt</keyword>
<keyword id="KW-0963">Cytoplasm</keyword>
<keyword id="KW-0460">Magnesium</keyword>
<keyword id="KW-0479">Metal-binding</keyword>
<keyword id="KW-0547">Nucleotide-binding</keyword>
<keyword id="KW-0554">One-carbon metabolism</keyword>
<keyword id="KW-0630">Potassium</keyword>
<keyword id="KW-0808">Transferase</keyword>